<comment type="function">
    <text evidence="1">Formation of pseudouridine at positions 38, 39 and 40 in the anticodon stem and loop of transfer RNAs.</text>
</comment>
<comment type="catalytic activity">
    <reaction evidence="1">
        <text>uridine(38/39/40) in tRNA = pseudouridine(38/39/40) in tRNA</text>
        <dbReference type="Rhea" id="RHEA:22376"/>
        <dbReference type="Rhea" id="RHEA-COMP:10085"/>
        <dbReference type="Rhea" id="RHEA-COMP:10087"/>
        <dbReference type="ChEBI" id="CHEBI:65314"/>
        <dbReference type="ChEBI" id="CHEBI:65315"/>
        <dbReference type="EC" id="5.4.99.12"/>
    </reaction>
</comment>
<comment type="subunit">
    <text evidence="1">Homodimer.</text>
</comment>
<comment type="similarity">
    <text evidence="1">Belongs to the tRNA pseudouridine synthase TruA family.</text>
</comment>
<reference key="1">
    <citation type="submission" date="2007-12" db="EMBL/GenBank/DDBJ databases">
        <title>Complete sequence of chromosome of Francisella philomiragia subsp. philomiragia ATCC 25017.</title>
        <authorList>
            <consortium name="US DOE Joint Genome Institute"/>
            <person name="Copeland A."/>
            <person name="Lucas S."/>
            <person name="Lapidus A."/>
            <person name="Barry K."/>
            <person name="Detter J.C."/>
            <person name="Glavina del Rio T."/>
            <person name="Hammon N."/>
            <person name="Israni S."/>
            <person name="Dalin E."/>
            <person name="Tice H."/>
            <person name="Pitluck S."/>
            <person name="Chain P."/>
            <person name="Malfatti S."/>
            <person name="Shin M."/>
            <person name="Vergez L."/>
            <person name="Schmutz J."/>
            <person name="Larimer F."/>
            <person name="Land M."/>
            <person name="Hauser L."/>
            <person name="Richardson P."/>
        </authorList>
    </citation>
    <scope>NUCLEOTIDE SEQUENCE [LARGE SCALE GENOMIC DNA]</scope>
    <source>
        <strain>ATCC 25017 / CCUG 19701 / FSC 153 / O#319-036</strain>
    </source>
</reference>
<dbReference type="EC" id="5.4.99.12" evidence="1"/>
<dbReference type="EMBL" id="CP000937">
    <property type="protein sequence ID" value="ABZ87941.1"/>
    <property type="molecule type" value="Genomic_DNA"/>
</dbReference>
<dbReference type="SMR" id="B0U0B1"/>
<dbReference type="KEGG" id="fph:Fphi_1716"/>
<dbReference type="eggNOG" id="COG0101">
    <property type="taxonomic scope" value="Bacteria"/>
</dbReference>
<dbReference type="HOGENOM" id="CLU_014673_0_2_6"/>
<dbReference type="GO" id="GO:0003723">
    <property type="term" value="F:RNA binding"/>
    <property type="evidence" value="ECO:0007669"/>
    <property type="project" value="InterPro"/>
</dbReference>
<dbReference type="GO" id="GO:0160147">
    <property type="term" value="F:tRNA pseudouridine(38-40) synthase activity"/>
    <property type="evidence" value="ECO:0007669"/>
    <property type="project" value="UniProtKB-EC"/>
</dbReference>
<dbReference type="GO" id="GO:0031119">
    <property type="term" value="P:tRNA pseudouridine synthesis"/>
    <property type="evidence" value="ECO:0007669"/>
    <property type="project" value="UniProtKB-UniRule"/>
</dbReference>
<dbReference type="CDD" id="cd02570">
    <property type="entry name" value="PseudoU_synth_EcTruA"/>
    <property type="match status" value="1"/>
</dbReference>
<dbReference type="FunFam" id="3.30.70.580:FF:000001">
    <property type="entry name" value="tRNA pseudouridine synthase A"/>
    <property type="match status" value="1"/>
</dbReference>
<dbReference type="Gene3D" id="3.30.70.660">
    <property type="entry name" value="Pseudouridine synthase I, catalytic domain, C-terminal subdomain"/>
    <property type="match status" value="1"/>
</dbReference>
<dbReference type="Gene3D" id="3.30.70.580">
    <property type="entry name" value="Pseudouridine synthase I, catalytic domain, N-terminal subdomain"/>
    <property type="match status" value="1"/>
</dbReference>
<dbReference type="HAMAP" id="MF_00171">
    <property type="entry name" value="TruA"/>
    <property type="match status" value="1"/>
</dbReference>
<dbReference type="InterPro" id="IPR020103">
    <property type="entry name" value="PsdUridine_synth_cat_dom_sf"/>
</dbReference>
<dbReference type="InterPro" id="IPR001406">
    <property type="entry name" value="PsdUridine_synth_TruA"/>
</dbReference>
<dbReference type="InterPro" id="IPR020097">
    <property type="entry name" value="PsdUridine_synth_TruA_a/b_dom"/>
</dbReference>
<dbReference type="InterPro" id="IPR020095">
    <property type="entry name" value="PsdUridine_synth_TruA_C"/>
</dbReference>
<dbReference type="InterPro" id="IPR020094">
    <property type="entry name" value="TruA/RsuA/RluB/E/F_N"/>
</dbReference>
<dbReference type="NCBIfam" id="TIGR00071">
    <property type="entry name" value="hisT_truA"/>
    <property type="match status" value="1"/>
</dbReference>
<dbReference type="PANTHER" id="PTHR11142">
    <property type="entry name" value="PSEUDOURIDYLATE SYNTHASE"/>
    <property type="match status" value="1"/>
</dbReference>
<dbReference type="PANTHER" id="PTHR11142:SF0">
    <property type="entry name" value="TRNA PSEUDOURIDINE SYNTHASE-LIKE 1"/>
    <property type="match status" value="1"/>
</dbReference>
<dbReference type="Pfam" id="PF01416">
    <property type="entry name" value="PseudoU_synth_1"/>
    <property type="match status" value="2"/>
</dbReference>
<dbReference type="PIRSF" id="PIRSF001430">
    <property type="entry name" value="tRNA_psdUrid_synth"/>
    <property type="match status" value="1"/>
</dbReference>
<dbReference type="SUPFAM" id="SSF55120">
    <property type="entry name" value="Pseudouridine synthase"/>
    <property type="match status" value="1"/>
</dbReference>
<feature type="chain" id="PRO_1000077090" description="tRNA pseudouridine synthase A">
    <location>
        <begin position="1"/>
        <end position="258"/>
    </location>
</feature>
<feature type="active site" description="Nucleophile" evidence="1">
    <location>
        <position position="52"/>
    </location>
</feature>
<feature type="binding site" evidence="1">
    <location>
        <position position="110"/>
    </location>
    <ligand>
        <name>substrate</name>
    </ligand>
</feature>
<protein>
    <recommendedName>
        <fullName evidence="1">tRNA pseudouridine synthase A</fullName>
        <ecNumber evidence="1">5.4.99.12</ecNumber>
    </recommendedName>
    <alternativeName>
        <fullName evidence="1">tRNA pseudouridine(38-40) synthase</fullName>
    </alternativeName>
    <alternativeName>
        <fullName evidence="1">tRNA pseudouridylate synthase I</fullName>
    </alternativeName>
    <alternativeName>
        <fullName evidence="1">tRNA-uridine isomerase I</fullName>
    </alternativeName>
</protein>
<keyword id="KW-0413">Isomerase</keyword>
<keyword id="KW-0819">tRNA processing</keyword>
<organism>
    <name type="scientific">Francisella philomiragia subsp. philomiragia (strain ATCC 25017 / CCUG 19701 / FSC 153 / O#319-036)</name>
    <dbReference type="NCBI Taxonomy" id="484022"/>
    <lineage>
        <taxon>Bacteria</taxon>
        <taxon>Pseudomonadati</taxon>
        <taxon>Pseudomonadota</taxon>
        <taxon>Gammaproteobacteria</taxon>
        <taxon>Thiotrichales</taxon>
        <taxon>Francisellaceae</taxon>
        <taxon>Francisella</taxon>
    </lineage>
</organism>
<sequence length="258" mass="29714">MKNYLLQIEYFGKNYCGWQRQSHSPSIQEELEKALSKIANQNIEVTCAGRTDTGVHATSQVVNFHSDADRNLSSWMRGTNALLPQGIKILDIKEVDNDFNSRFTATNRTYNYIIYNSAISSPILAEHCLWENRQLNIDKMNQACKYLLGEQDFTSFRSSQCQSNTPFRNIQKAEFIKQGSFIVFEVVGNAFLHHMIRNFIGSLLKIGLEFESPEWIKLVLEAKDRTKAAETAKAHGLYFVGVEYPEFSFRRRVIELFC</sequence>
<name>TRUA_FRAP2</name>
<proteinExistence type="inferred from homology"/>
<evidence type="ECO:0000255" key="1">
    <source>
        <dbReference type="HAMAP-Rule" id="MF_00171"/>
    </source>
</evidence>
<gene>
    <name evidence="1" type="primary">truA</name>
    <name type="ordered locus">Fphi_1716</name>
</gene>
<accession>B0U0B1</accession>